<protein>
    <recommendedName>
        <fullName>SH3 and multiple ankyrin repeat domains protein 2</fullName>
        <shortName>Shank2</shortName>
    </recommendedName>
    <alternativeName>
        <fullName>Cortactin-binding protein 1</fullName>
        <shortName>CortBP1</shortName>
    </alternativeName>
    <alternativeName>
        <fullName>Proline-rich synapse-associated protein 1</fullName>
    </alternativeName>
</protein>
<dbReference type="EMBL" id="AB208025">
    <property type="protein sequence ID" value="BAH37016.1"/>
    <property type="molecule type" value="mRNA"/>
</dbReference>
<dbReference type="EMBL" id="AB208026">
    <property type="protein sequence ID" value="BAH37017.1"/>
    <property type="molecule type" value="mRNA"/>
</dbReference>
<dbReference type="EMBL" id="AP000590">
    <property type="status" value="NOT_ANNOTATED_CDS"/>
    <property type="molecule type" value="Genomic_DNA"/>
</dbReference>
<dbReference type="EMBL" id="AP001271">
    <property type="status" value="NOT_ANNOTATED_CDS"/>
    <property type="molecule type" value="Genomic_DNA"/>
</dbReference>
<dbReference type="EMBL" id="AP003783">
    <property type="status" value="NOT_ANNOTATED_CDS"/>
    <property type="molecule type" value="Genomic_DNA"/>
</dbReference>
<dbReference type="EMBL" id="AP005401">
    <property type="status" value="NOT_ANNOTATED_CDS"/>
    <property type="molecule type" value="Genomic_DNA"/>
</dbReference>
<dbReference type="EMBL" id="BC093885">
    <property type="protein sequence ID" value="AAH93885.1"/>
    <property type="molecule type" value="mRNA"/>
</dbReference>
<dbReference type="EMBL" id="BC112097">
    <property type="protein sequence ID" value="AAI12098.1"/>
    <property type="molecule type" value="mRNA"/>
</dbReference>
<dbReference type="EMBL" id="DQ152234">
    <property type="protein sequence ID" value="AAZ77790.1"/>
    <property type="molecule type" value="mRNA"/>
</dbReference>
<dbReference type="EMBL" id="AB028945">
    <property type="protein sequence ID" value="BAA82974.1"/>
    <property type="molecule type" value="mRNA"/>
</dbReference>
<dbReference type="EMBL" id="AF141901">
    <property type="protein sequence ID" value="AAF02496.1"/>
    <property type="molecule type" value="mRNA"/>
</dbReference>
<dbReference type="CCDS" id="CCDS91527.1">
    <molecule id="Q9UPX8-1"/>
</dbReference>
<dbReference type="RefSeq" id="NP_001366155.1">
    <molecule id="Q9UPX8-1"/>
    <property type="nucleotide sequence ID" value="NM_001379226.1"/>
</dbReference>
<dbReference type="RefSeq" id="NP_036441.2">
    <molecule id="Q9UPX8-3"/>
    <property type="nucleotide sequence ID" value="NM_012309.5"/>
</dbReference>
<dbReference type="RefSeq" id="NP_573573.2">
    <property type="nucleotide sequence ID" value="NM_133266.4"/>
</dbReference>
<dbReference type="RefSeq" id="XP_005277989.1">
    <property type="nucleotide sequence ID" value="XM_005277932.3"/>
</dbReference>
<dbReference type="RefSeq" id="XP_016872876.1">
    <property type="nucleotide sequence ID" value="XM_017017387.1"/>
</dbReference>
<dbReference type="RefSeq" id="XP_016872877.1">
    <molecule id="Q9UPX8-3"/>
    <property type="nucleotide sequence ID" value="XM_017017388.2"/>
</dbReference>
<dbReference type="RefSeq" id="XP_054224080.1">
    <molecule id="Q9UPX8-3"/>
    <property type="nucleotide sequence ID" value="XM_054368105.1"/>
</dbReference>
<dbReference type="PDB" id="8ATJ">
    <property type="method" value="X-ray"/>
    <property type="resolution" value="2.12 A"/>
    <property type="chains" value="AAA=1780-1849"/>
</dbReference>
<dbReference type="PDB" id="8B10">
    <property type="method" value="X-ray"/>
    <property type="resolution" value="1.95 A"/>
    <property type="chains" value="A/B/C/D/E/F=1780-1849"/>
</dbReference>
<dbReference type="PDBsum" id="8ATJ"/>
<dbReference type="PDBsum" id="8B10"/>
<dbReference type="SMR" id="Q9UPX8"/>
<dbReference type="BioGRID" id="116598">
    <property type="interactions" value="41"/>
</dbReference>
<dbReference type="DIP" id="DIP-52255N"/>
<dbReference type="FunCoup" id="Q9UPX8">
    <property type="interactions" value="201"/>
</dbReference>
<dbReference type="IntAct" id="Q9UPX8">
    <property type="interactions" value="22"/>
</dbReference>
<dbReference type="MINT" id="Q9UPX8"/>
<dbReference type="STRING" id="9606.ENSP00000345193"/>
<dbReference type="GlyCosmos" id="Q9UPX8">
    <property type="glycosylation" value="5 sites, 1 glycan"/>
</dbReference>
<dbReference type="GlyGen" id="Q9UPX8">
    <property type="glycosylation" value="3 sites, 1 O-linked glycan (1 site)"/>
</dbReference>
<dbReference type="iPTMnet" id="Q9UPX8"/>
<dbReference type="PhosphoSitePlus" id="Q9UPX8"/>
<dbReference type="BioMuta" id="SHANK2"/>
<dbReference type="DMDM" id="254763402"/>
<dbReference type="jPOST" id="Q9UPX8"/>
<dbReference type="MassIVE" id="Q9UPX8"/>
<dbReference type="PaxDb" id="9606-ENSP00000469689"/>
<dbReference type="PeptideAtlas" id="Q9UPX8"/>
<dbReference type="ProteomicsDB" id="85467">
    <molecule id="Q9UPX8-1"/>
</dbReference>
<dbReference type="ProteomicsDB" id="85468">
    <molecule id="Q9UPX8-2"/>
</dbReference>
<dbReference type="ProteomicsDB" id="85469">
    <molecule id="Q9UPX8-3"/>
</dbReference>
<dbReference type="ProteomicsDB" id="85470">
    <molecule id="Q9UPX8-4"/>
</dbReference>
<dbReference type="Pumba" id="Q9UPX8"/>
<dbReference type="ABCD" id="Q9UPX8">
    <property type="antibodies" value="2 sequenced antibodies"/>
</dbReference>
<dbReference type="Antibodypedia" id="2161">
    <property type="antibodies" value="295 antibodies from 28 providers"/>
</dbReference>
<dbReference type="DNASU" id="22941"/>
<dbReference type="Ensembl" id="ENST00000601538.6">
    <molecule id="Q9UPX8-3"/>
    <property type="protein sequence ID" value="ENSP00000469689.2"/>
    <property type="gene ID" value="ENSG00000162105.21"/>
</dbReference>
<dbReference type="Ensembl" id="ENST00000656230.1">
    <molecule id="Q9UPX8-1"/>
    <property type="protein sequence ID" value="ENSP00000499561.1"/>
    <property type="gene ID" value="ENSG00000162105.21"/>
</dbReference>
<dbReference type="GeneID" id="22941"/>
<dbReference type="KEGG" id="hsa:22941"/>
<dbReference type="MANE-Select" id="ENST00000601538.6">
    <property type="protein sequence ID" value="ENSP00000469689.2"/>
    <property type="RefSeq nucleotide sequence ID" value="NM_012309.5"/>
    <property type="RefSeq protein sequence ID" value="NP_036441.2"/>
</dbReference>
<dbReference type="UCSC" id="uc058etm.1">
    <molecule id="Q9UPX8-3"/>
    <property type="organism name" value="human"/>
</dbReference>
<dbReference type="AGR" id="HGNC:14295"/>
<dbReference type="CTD" id="22941"/>
<dbReference type="DisGeNET" id="22941"/>
<dbReference type="GeneCards" id="SHANK2"/>
<dbReference type="HGNC" id="HGNC:14295">
    <property type="gene designation" value="SHANK2"/>
</dbReference>
<dbReference type="HPA" id="ENSG00000162105">
    <property type="expression patterns" value="Tissue enhanced (brain)"/>
</dbReference>
<dbReference type="MalaCards" id="SHANK2"/>
<dbReference type="MIM" id="603290">
    <property type="type" value="gene"/>
</dbReference>
<dbReference type="MIM" id="613436">
    <property type="type" value="phenotype"/>
</dbReference>
<dbReference type="neXtProt" id="NX_Q9UPX8"/>
<dbReference type="OpenTargets" id="ENSG00000162105"/>
<dbReference type="PharmGKB" id="PA37867"/>
<dbReference type="VEuPathDB" id="HostDB:ENSG00000162105"/>
<dbReference type="eggNOG" id="KOG0504">
    <property type="taxonomic scope" value="Eukaryota"/>
</dbReference>
<dbReference type="eggNOG" id="KOG4375">
    <property type="taxonomic scope" value="Eukaryota"/>
</dbReference>
<dbReference type="GeneTree" id="ENSGT00940000153561"/>
<dbReference type="HOGENOM" id="CLU_001824_2_0_1"/>
<dbReference type="InParanoid" id="Q9UPX8"/>
<dbReference type="OMA" id="RQKSIAC"/>
<dbReference type="OrthoDB" id="445896at2759"/>
<dbReference type="PAN-GO" id="Q9UPX8">
    <property type="GO annotations" value="5 GO annotations based on evolutionary models"/>
</dbReference>
<dbReference type="PhylomeDB" id="Q9UPX8"/>
<dbReference type="PathwayCommons" id="Q9UPX8"/>
<dbReference type="Reactome" id="R-HSA-6794361">
    <property type="pathway name" value="Neurexins and neuroligins"/>
</dbReference>
<dbReference type="SignaLink" id="Q9UPX8"/>
<dbReference type="SIGNOR" id="Q9UPX8"/>
<dbReference type="BioGRID-ORCS" id="22941">
    <property type="hits" value="10 hits in 284 CRISPR screens"/>
</dbReference>
<dbReference type="CD-CODE" id="FB4E32DD">
    <property type="entry name" value="Presynaptic clusters and postsynaptic densities"/>
</dbReference>
<dbReference type="ChiTaRS" id="SHANK2">
    <property type="organism name" value="human"/>
</dbReference>
<dbReference type="GeneWiki" id="SHANK2"/>
<dbReference type="GenomeRNAi" id="22941"/>
<dbReference type="Pharos" id="Q9UPX8">
    <property type="development level" value="Tbio"/>
</dbReference>
<dbReference type="PRO" id="PR:Q9UPX8"/>
<dbReference type="Proteomes" id="UP000005640">
    <property type="component" value="Chromosome 11"/>
</dbReference>
<dbReference type="RNAct" id="Q9UPX8">
    <property type="molecule type" value="protein"/>
</dbReference>
<dbReference type="Bgee" id="ENSG00000162105">
    <property type="expression patterns" value="Expressed in Brodmann (1909) area 23 and 166 other cell types or tissues"/>
</dbReference>
<dbReference type="ExpressionAtlas" id="Q9UPX8">
    <property type="expression patterns" value="baseline and differential"/>
</dbReference>
<dbReference type="GO" id="GO:0016324">
    <property type="term" value="C:apical plasma membrane"/>
    <property type="evidence" value="ECO:0000250"/>
    <property type="project" value="BHF-UCL"/>
</dbReference>
<dbReference type="GO" id="GO:0031526">
    <property type="term" value="C:brush border membrane"/>
    <property type="evidence" value="ECO:0000250"/>
    <property type="project" value="BHF-UCL"/>
</dbReference>
<dbReference type="GO" id="GO:0060170">
    <property type="term" value="C:ciliary membrane"/>
    <property type="evidence" value="ECO:0000250"/>
    <property type="project" value="BHF-UCL"/>
</dbReference>
<dbReference type="GO" id="GO:0005829">
    <property type="term" value="C:cytosol"/>
    <property type="evidence" value="ECO:0000304"/>
    <property type="project" value="Reactome"/>
</dbReference>
<dbReference type="GO" id="GO:0043197">
    <property type="term" value="C:dendritic spine"/>
    <property type="evidence" value="ECO:0000250"/>
    <property type="project" value="BHF-UCL"/>
</dbReference>
<dbReference type="GO" id="GO:0030426">
    <property type="term" value="C:growth cone"/>
    <property type="evidence" value="ECO:0000250"/>
    <property type="project" value="BHF-UCL"/>
</dbReference>
<dbReference type="GO" id="GO:0043005">
    <property type="term" value="C:neuron projection"/>
    <property type="evidence" value="ECO:0000250"/>
    <property type="project" value="BHF-UCL"/>
</dbReference>
<dbReference type="GO" id="GO:0043025">
    <property type="term" value="C:neuronal cell body"/>
    <property type="evidence" value="ECO:0000250"/>
    <property type="project" value="BHF-UCL"/>
</dbReference>
<dbReference type="GO" id="GO:0001917">
    <property type="term" value="C:photoreceptor inner segment"/>
    <property type="evidence" value="ECO:0000250"/>
    <property type="project" value="BHF-UCL"/>
</dbReference>
<dbReference type="GO" id="GO:0001750">
    <property type="term" value="C:photoreceptor outer segment"/>
    <property type="evidence" value="ECO:0000250"/>
    <property type="project" value="BHF-UCL"/>
</dbReference>
<dbReference type="GO" id="GO:0005886">
    <property type="term" value="C:plasma membrane"/>
    <property type="evidence" value="ECO:0000250"/>
    <property type="project" value="BHF-UCL"/>
</dbReference>
<dbReference type="GO" id="GO:0014069">
    <property type="term" value="C:postsynaptic density"/>
    <property type="evidence" value="ECO:0000250"/>
    <property type="project" value="BHF-UCL"/>
</dbReference>
<dbReference type="GO" id="GO:0035255">
    <property type="term" value="F:ionotropic glutamate receptor binding"/>
    <property type="evidence" value="ECO:0000250"/>
    <property type="project" value="BHF-UCL"/>
</dbReference>
<dbReference type="GO" id="GO:0017124">
    <property type="term" value="F:SH3 domain binding"/>
    <property type="evidence" value="ECO:0007669"/>
    <property type="project" value="UniProtKB-KW"/>
</dbReference>
<dbReference type="GO" id="GO:0030160">
    <property type="term" value="F:synaptic receptor adaptor activity"/>
    <property type="evidence" value="ECO:0000318"/>
    <property type="project" value="GO_Central"/>
</dbReference>
<dbReference type="GO" id="GO:0030534">
    <property type="term" value="P:adult behavior"/>
    <property type="evidence" value="ECO:0000315"/>
    <property type="project" value="BHF-UCL"/>
</dbReference>
<dbReference type="GO" id="GO:0007612">
    <property type="term" value="P:learning"/>
    <property type="evidence" value="ECO:0000315"/>
    <property type="project" value="BHF-UCL"/>
</dbReference>
<dbReference type="GO" id="GO:0060292">
    <property type="term" value="P:long-term synaptic depression"/>
    <property type="evidence" value="ECO:0000250"/>
    <property type="project" value="BHF-UCL"/>
</dbReference>
<dbReference type="GO" id="GO:0060291">
    <property type="term" value="P:long-term synaptic potentiation"/>
    <property type="evidence" value="ECO:0000250"/>
    <property type="project" value="BHF-UCL"/>
</dbReference>
<dbReference type="GO" id="GO:0035331">
    <property type="term" value="P:negative regulation of hippo signaling"/>
    <property type="evidence" value="ECO:0000315"/>
    <property type="project" value="FlyBase"/>
</dbReference>
<dbReference type="GO" id="GO:0008284">
    <property type="term" value="P:positive regulation of cell population proliferation"/>
    <property type="evidence" value="ECO:0000315"/>
    <property type="project" value="FlyBase"/>
</dbReference>
<dbReference type="GO" id="GO:0035176">
    <property type="term" value="P:social behavior"/>
    <property type="evidence" value="ECO:0000315"/>
    <property type="project" value="BHF-UCL"/>
</dbReference>
<dbReference type="GO" id="GO:0007416">
    <property type="term" value="P:synapse assembly"/>
    <property type="evidence" value="ECO:0000250"/>
    <property type="project" value="BHF-UCL"/>
</dbReference>
<dbReference type="GO" id="GO:0071625">
    <property type="term" value="P:vocalization behavior"/>
    <property type="evidence" value="ECO:0000315"/>
    <property type="project" value="BHF-UCL"/>
</dbReference>
<dbReference type="CDD" id="cd17176">
    <property type="entry name" value="FERM_F0_SHANK2"/>
    <property type="match status" value="1"/>
</dbReference>
<dbReference type="CDD" id="cd06746">
    <property type="entry name" value="PDZ_SHANK1_3-like"/>
    <property type="match status" value="1"/>
</dbReference>
<dbReference type="CDD" id="cd09506">
    <property type="entry name" value="SAM_Shank1_2_3"/>
    <property type="match status" value="1"/>
</dbReference>
<dbReference type="CDD" id="cd11983">
    <property type="entry name" value="SH3_Shank2"/>
    <property type="match status" value="1"/>
</dbReference>
<dbReference type="FunFam" id="3.10.20.90:FF:000029">
    <property type="entry name" value="SH3 and multiple ankyrin repeat domains protein 1"/>
    <property type="match status" value="1"/>
</dbReference>
<dbReference type="FunFam" id="1.10.150.50:FF:000006">
    <property type="entry name" value="SH3 and multiple ankyrin repeat domains protein 2"/>
    <property type="match status" value="1"/>
</dbReference>
<dbReference type="FunFam" id="1.25.40.20:FF:000224">
    <property type="entry name" value="SH3 and multiple ankyrin repeat domains protein 2"/>
    <property type="match status" value="1"/>
</dbReference>
<dbReference type="FunFam" id="1.25.40.20:FF:000233">
    <property type="entry name" value="SH3 and multiple ankyrin repeat domains protein 2"/>
    <property type="match status" value="1"/>
</dbReference>
<dbReference type="FunFam" id="2.30.30.40:FF:000025">
    <property type="entry name" value="SH3 and multiple ankyrin repeat domains protein 2"/>
    <property type="match status" value="1"/>
</dbReference>
<dbReference type="FunFam" id="2.30.42.10:FF:000018">
    <property type="entry name" value="SH3 and multiple ankyrin repeat domains protein 2"/>
    <property type="match status" value="1"/>
</dbReference>
<dbReference type="Gene3D" id="2.30.42.10">
    <property type="match status" value="1"/>
</dbReference>
<dbReference type="Gene3D" id="1.25.40.20">
    <property type="entry name" value="Ankyrin repeat-containing domain"/>
    <property type="match status" value="2"/>
</dbReference>
<dbReference type="Gene3D" id="3.10.20.90">
    <property type="entry name" value="Phosphatidylinositol 3-kinase Catalytic Subunit, Chain A, domain 1"/>
    <property type="match status" value="1"/>
</dbReference>
<dbReference type="Gene3D" id="2.30.30.40">
    <property type="entry name" value="SH3 Domains"/>
    <property type="match status" value="1"/>
</dbReference>
<dbReference type="Gene3D" id="1.10.150.50">
    <property type="entry name" value="Transcription Factor, Ets-1"/>
    <property type="match status" value="1"/>
</dbReference>
<dbReference type="InterPro" id="IPR002110">
    <property type="entry name" value="Ankyrin_rpt"/>
</dbReference>
<dbReference type="InterPro" id="IPR036770">
    <property type="entry name" value="Ankyrin_rpt-contain_sf"/>
</dbReference>
<dbReference type="InterPro" id="IPR032425">
    <property type="entry name" value="FERM_f0"/>
</dbReference>
<dbReference type="InterPro" id="IPR001478">
    <property type="entry name" value="PDZ"/>
</dbReference>
<dbReference type="InterPro" id="IPR041489">
    <property type="entry name" value="PDZ_6"/>
</dbReference>
<dbReference type="InterPro" id="IPR036034">
    <property type="entry name" value="PDZ_sf"/>
</dbReference>
<dbReference type="InterPro" id="IPR001660">
    <property type="entry name" value="SAM"/>
</dbReference>
<dbReference type="InterPro" id="IPR013761">
    <property type="entry name" value="SAM/pointed_sf"/>
</dbReference>
<dbReference type="InterPro" id="IPR036028">
    <property type="entry name" value="SH3-like_dom_sf"/>
</dbReference>
<dbReference type="InterPro" id="IPR001452">
    <property type="entry name" value="SH3_domain"/>
</dbReference>
<dbReference type="InterPro" id="IPR051569">
    <property type="entry name" value="SHANK"/>
</dbReference>
<dbReference type="PANTHER" id="PTHR24135">
    <property type="entry name" value="SH3 AND MULTIPLE ANKYRIN REPEAT DOMAINS PROTEIN"/>
    <property type="match status" value="1"/>
</dbReference>
<dbReference type="PANTHER" id="PTHR24135:SF17">
    <property type="entry name" value="SH3 AND MULTIPLE ANKYRIN REPEAT DOMAINS PROTEIN 2"/>
    <property type="match status" value="1"/>
</dbReference>
<dbReference type="Pfam" id="PF12796">
    <property type="entry name" value="Ank_2"/>
    <property type="match status" value="2"/>
</dbReference>
<dbReference type="Pfam" id="PF16511">
    <property type="entry name" value="FERM_f0"/>
    <property type="match status" value="1"/>
</dbReference>
<dbReference type="Pfam" id="PF17820">
    <property type="entry name" value="PDZ_6"/>
    <property type="match status" value="1"/>
</dbReference>
<dbReference type="Pfam" id="PF00536">
    <property type="entry name" value="SAM_1"/>
    <property type="match status" value="1"/>
</dbReference>
<dbReference type="Pfam" id="PF07653">
    <property type="entry name" value="SH3_2"/>
    <property type="match status" value="1"/>
</dbReference>
<dbReference type="SMART" id="SM00248">
    <property type="entry name" value="ANK"/>
    <property type="match status" value="6"/>
</dbReference>
<dbReference type="SMART" id="SM00228">
    <property type="entry name" value="PDZ"/>
    <property type="match status" value="1"/>
</dbReference>
<dbReference type="SMART" id="SM00454">
    <property type="entry name" value="SAM"/>
    <property type="match status" value="1"/>
</dbReference>
<dbReference type="SMART" id="SM00326">
    <property type="entry name" value="SH3"/>
    <property type="match status" value="1"/>
</dbReference>
<dbReference type="SUPFAM" id="SSF48403">
    <property type="entry name" value="Ankyrin repeat"/>
    <property type="match status" value="1"/>
</dbReference>
<dbReference type="SUPFAM" id="SSF50156">
    <property type="entry name" value="PDZ domain-like"/>
    <property type="match status" value="1"/>
</dbReference>
<dbReference type="SUPFAM" id="SSF47769">
    <property type="entry name" value="SAM/Pointed domain"/>
    <property type="match status" value="1"/>
</dbReference>
<dbReference type="SUPFAM" id="SSF50044">
    <property type="entry name" value="SH3-domain"/>
    <property type="match status" value="1"/>
</dbReference>
<dbReference type="PROSITE" id="PS50297">
    <property type="entry name" value="ANK_REP_REGION"/>
    <property type="match status" value="1"/>
</dbReference>
<dbReference type="PROSITE" id="PS50088">
    <property type="entry name" value="ANK_REPEAT"/>
    <property type="match status" value="4"/>
</dbReference>
<dbReference type="PROSITE" id="PS50106">
    <property type="entry name" value="PDZ"/>
    <property type="match status" value="1"/>
</dbReference>
<dbReference type="PROSITE" id="PS50105">
    <property type="entry name" value="SAM_DOMAIN"/>
    <property type="match status" value="1"/>
</dbReference>
<dbReference type="PROSITE" id="PS50002">
    <property type="entry name" value="SH3"/>
    <property type="match status" value="1"/>
</dbReference>
<evidence type="ECO:0000250" key="1"/>
<evidence type="ECO:0000250" key="2">
    <source>
        <dbReference type="UniProtKB" id="Q80Z38"/>
    </source>
</evidence>
<evidence type="ECO:0000255" key="3"/>
<evidence type="ECO:0000255" key="4">
    <source>
        <dbReference type="PROSITE-ProRule" id="PRU00143"/>
    </source>
</evidence>
<evidence type="ECO:0000255" key="5">
    <source>
        <dbReference type="PROSITE-ProRule" id="PRU00184"/>
    </source>
</evidence>
<evidence type="ECO:0000255" key="6">
    <source>
        <dbReference type="PROSITE-ProRule" id="PRU00192"/>
    </source>
</evidence>
<evidence type="ECO:0000256" key="7">
    <source>
        <dbReference type="SAM" id="MobiDB-lite"/>
    </source>
</evidence>
<evidence type="ECO:0000269" key="8">
    <source>
    </source>
</evidence>
<evidence type="ECO:0000269" key="9">
    <source>
    </source>
</evidence>
<evidence type="ECO:0000269" key="10">
    <source>
    </source>
</evidence>
<evidence type="ECO:0000269" key="11">
    <source>
    </source>
</evidence>
<evidence type="ECO:0000269" key="12">
    <source>
    </source>
</evidence>
<evidence type="ECO:0000269" key="13">
    <source>
    </source>
</evidence>
<evidence type="ECO:0000303" key="14">
    <source>
    </source>
</evidence>
<evidence type="ECO:0000303" key="15">
    <source>
    </source>
</evidence>
<evidence type="ECO:0000303" key="16">
    <source>
    </source>
</evidence>
<evidence type="ECO:0000303" key="17">
    <source ref="1"/>
</evidence>
<evidence type="ECO:0000305" key="18"/>
<evidence type="ECO:0007829" key="19">
    <source>
        <dbReference type="PDB" id="8B10"/>
    </source>
</evidence>
<feature type="chain" id="PRO_0000174673" description="SH3 and multiple ankyrin repeat domains protein 2">
    <location>
        <begin position="1"/>
        <end position="1849"/>
    </location>
</feature>
<feature type="repeat" description="ANK 1" evidence="3">
    <location>
        <begin position="196"/>
        <end position="226"/>
    </location>
</feature>
<feature type="repeat" description="ANK 2" evidence="3">
    <location>
        <begin position="230"/>
        <end position="259"/>
    </location>
</feature>
<feature type="repeat" description="ANK 3" evidence="3">
    <location>
        <begin position="263"/>
        <end position="293"/>
    </location>
</feature>
<feature type="repeat" description="ANK 4" evidence="3">
    <location>
        <begin position="297"/>
        <end position="326"/>
    </location>
</feature>
<feature type="repeat" description="ANK 5" evidence="3">
    <location>
        <begin position="330"/>
        <end position="359"/>
    </location>
</feature>
<feature type="repeat" description="ANK 6" evidence="3">
    <location>
        <begin position="363"/>
        <end position="393"/>
    </location>
</feature>
<feature type="domain" description="SH3" evidence="6">
    <location>
        <begin position="526"/>
        <end position="585"/>
    </location>
</feature>
<feature type="domain" description="PDZ" evidence="4">
    <location>
        <begin position="626"/>
        <end position="720"/>
    </location>
</feature>
<feature type="domain" description="SAM" evidence="5">
    <location>
        <begin position="1786"/>
        <end position="1849"/>
    </location>
</feature>
<feature type="region of interest" description="Disordered" evidence="7">
    <location>
        <begin position="1"/>
        <end position="33"/>
    </location>
</feature>
<feature type="region of interest" description="Disordered" evidence="7">
    <location>
        <begin position="451"/>
        <end position="493"/>
    </location>
</feature>
<feature type="region of interest" description="Disordered" evidence="7">
    <location>
        <begin position="764"/>
        <end position="808"/>
    </location>
</feature>
<feature type="region of interest" description="Disordered" evidence="7">
    <location>
        <begin position="878"/>
        <end position="910"/>
    </location>
</feature>
<feature type="region of interest" description="Disordered" evidence="7">
    <location>
        <begin position="1013"/>
        <end position="1293"/>
    </location>
</feature>
<feature type="region of interest" description="Disordered" evidence="7">
    <location>
        <begin position="1328"/>
        <end position="1371"/>
    </location>
</feature>
<feature type="region of interest" description="Disordered" evidence="7">
    <location>
        <begin position="1432"/>
        <end position="1526"/>
    </location>
</feature>
<feature type="region of interest" description="Disordered" evidence="7">
    <location>
        <begin position="1574"/>
        <end position="1594"/>
    </location>
</feature>
<feature type="region of interest" description="Disordered" evidence="7">
    <location>
        <begin position="1678"/>
        <end position="1776"/>
    </location>
</feature>
<feature type="short sequence motif" description="SH3-binding" evidence="3">
    <location>
        <begin position="1327"/>
        <end position="1333"/>
    </location>
</feature>
<feature type="compositionally biased region" description="Low complexity" evidence="7">
    <location>
        <begin position="15"/>
        <end position="25"/>
    </location>
</feature>
<feature type="compositionally biased region" description="Basic and acidic residues" evidence="7">
    <location>
        <begin position="764"/>
        <end position="774"/>
    </location>
</feature>
<feature type="compositionally biased region" description="Pro residues" evidence="7">
    <location>
        <begin position="887"/>
        <end position="903"/>
    </location>
</feature>
<feature type="compositionally biased region" description="Low complexity" evidence="7">
    <location>
        <begin position="1040"/>
        <end position="1052"/>
    </location>
</feature>
<feature type="compositionally biased region" description="Basic and acidic residues" evidence="7">
    <location>
        <begin position="1086"/>
        <end position="1097"/>
    </location>
</feature>
<feature type="compositionally biased region" description="Acidic residues" evidence="7">
    <location>
        <begin position="1128"/>
        <end position="1138"/>
    </location>
</feature>
<feature type="compositionally biased region" description="Low complexity" evidence="7">
    <location>
        <begin position="1159"/>
        <end position="1170"/>
    </location>
</feature>
<feature type="compositionally biased region" description="Low complexity" evidence="7">
    <location>
        <begin position="1181"/>
        <end position="1199"/>
    </location>
</feature>
<feature type="compositionally biased region" description="Low complexity" evidence="7">
    <location>
        <begin position="1208"/>
        <end position="1221"/>
    </location>
</feature>
<feature type="compositionally biased region" description="Basic and acidic residues" evidence="7">
    <location>
        <begin position="1274"/>
        <end position="1293"/>
    </location>
</feature>
<feature type="compositionally biased region" description="Low complexity" evidence="7">
    <location>
        <begin position="1343"/>
        <end position="1357"/>
    </location>
</feature>
<feature type="compositionally biased region" description="Polar residues" evidence="7">
    <location>
        <begin position="1445"/>
        <end position="1460"/>
    </location>
</feature>
<feature type="compositionally biased region" description="Basic and acidic residues" evidence="7">
    <location>
        <begin position="1494"/>
        <end position="1505"/>
    </location>
</feature>
<feature type="compositionally biased region" description="Low complexity" evidence="7">
    <location>
        <begin position="1506"/>
        <end position="1522"/>
    </location>
</feature>
<feature type="compositionally biased region" description="Pro residues" evidence="7">
    <location>
        <begin position="1577"/>
        <end position="1588"/>
    </location>
</feature>
<feature type="compositionally biased region" description="Polar residues" evidence="7">
    <location>
        <begin position="1678"/>
        <end position="1692"/>
    </location>
</feature>
<feature type="compositionally biased region" description="Low complexity" evidence="7">
    <location>
        <begin position="1721"/>
        <end position="1738"/>
    </location>
</feature>
<feature type="compositionally biased region" description="Low complexity" evidence="7">
    <location>
        <begin position="1760"/>
        <end position="1774"/>
    </location>
</feature>
<feature type="modified residue" description="Phosphoserine" evidence="2">
    <location>
        <position position="831"/>
    </location>
</feature>
<feature type="modified residue" description="Phosphothreonine" evidence="2">
    <location>
        <position position="860"/>
    </location>
</feature>
<feature type="modified residue" description="Phosphoserine" evidence="2">
    <location>
        <position position="960"/>
    </location>
</feature>
<feature type="modified residue" description="Phosphoserine" evidence="2">
    <location>
        <position position="1099"/>
    </location>
</feature>
<feature type="modified residue" description="Phosphothreonine" evidence="2">
    <location>
        <position position="1278"/>
    </location>
</feature>
<feature type="modified residue" description="Phosphoserine" evidence="2">
    <location>
        <position position="1709"/>
    </location>
</feature>
<feature type="modified residue" description="Phosphoserine" evidence="2">
    <location>
        <position position="1713"/>
    </location>
</feature>
<feature type="glycosylation site" description="O-linked (GlcNAc) threonine" evidence="1">
    <location>
        <position position="1667"/>
    </location>
</feature>
<feature type="splice variant" id="VSP_061470" description="In isoform 2 and isoform 4." evidence="14 15 16">
    <original>MPRSPTSSEDEMAQSFSDYSVGSESDSSKEETIYDTIRATAEKPGGARTEESQGNTLVIRVVIHDLQQTKCIRFNPDATVWVAKQRILCTLTQSLKDVLNYGLFQPASNGRDGKFLDEERLLREYPQPVGEGVPSLEFRYKKRVYKQASLDEKQLAKLHTKTNLKKCMDHIQHRLVEKITKMLDRGLDPNFHDPETGETPLTLAAQLDDSVEVIKALKNGGAHLDFRAKDGMTALHKAARARNQVALKTLLELGASPDYKDSYGLTPLYHTAIVGGDPYCCELLLHEHATVCCKDENGWHEIHQACRYGHVQHLEHLLFYGADMSAQNASGNTALHICALYNQDSCARVLLFRGGNKELKNYNSQTPFQVAIIAGNFELAEYIKNHKETDIVPFREAPAYSNRRRRPPNTLAAPRVLLRSNSDNNLNASAPDWAVCSTATSHRSLSPQLLQQMPSKPEGAAKTIGSYVPGPRSRSPSLNRLGGAGEDGKRPQPLWHVGSPFALGANKDSLSAFEYPGPKRKLYSAVPGRLFVAVKPYQPQVDGEIPLHRGDRVKVLSIGEGGFWEGSARGHIGWFPAECVEEVQCKPRDSQAETRADRSKKLFRHYTVGSYDSFDTS</original>
    <variation>MMMNVPGGGAAAVMMTGYNNGRCPRNSLY</variation>
    <location>
        <begin position="1"/>
        <end position="617"/>
    </location>
</feature>
<feature type="splice variant" id="VSP_061471" description="In isoform 1." evidence="17">
    <original>MPRSPTSSEDEMAQSFSDYSVGSESDSSKEETIYDTIRATAEKPGGARTEESQGNTLVIRVVIHDLQQTKCIRFNPDATVWVAKQRILCTLTQSLKDVLNYGLFQPASNGRDGKFLDEERLLREYPQPVGEGVPSLEFRYKKRVYKQASLDEKQLAKLHTKTNLKKCMDHIQHRLVEKITKMLDRGLDPNFHDPETGETPLTLAAQLDDSVEVIKALKNGGAHLDFRAKDGMTALHKAARARNQVALKTLLELGASPDYKDSYGLTPLYHTAIVGGDPYCCELLLHEHATVCCKDENGWHEIHQACRYGHVQHLEHLLFYGADMSAQNASGNTALHICALYNQDSCARVLLFRGGNKELKNYNSQTPFQVAIIAGNFELAEYIKNHKETDI</original>
    <variation>MKSLLNAFTKKE</variation>
    <location>
        <begin position="1"/>
        <end position="391"/>
    </location>
</feature>
<feature type="splice variant" id="VSP_061472" description="In isoform 4." evidence="14">
    <location>
        <begin position="763"/>
        <end position="769"/>
    </location>
</feature>
<feature type="splice variant" id="VSP_061473" description="In isoform 2." evidence="15 16">
    <original>DSRIFLSGITEEERQFLAP</original>
    <variation>GKKCGTPPQKLPLGFQTQP</variation>
    <location>
        <begin position="851"/>
        <end position="869"/>
    </location>
</feature>
<feature type="splice variant" id="VSP_061474" description="In isoform 2." evidence="15 16">
    <location>
        <begin position="870"/>
        <end position="1849"/>
    </location>
</feature>
<feature type="sequence variant" id="VAR_085767" description="Found in a child with developmental disabilities; uncertain significance; dbSNP:rs868939163." evidence="13">
    <original>A</original>
    <variation>T</variation>
    <location>
        <position position="1101"/>
    </location>
</feature>
<feature type="helix" evidence="19">
    <location>
        <begin position="1783"/>
        <end position="1785"/>
    </location>
</feature>
<feature type="helix" evidence="19">
    <location>
        <begin position="1788"/>
        <end position="1797"/>
    </location>
</feature>
<feature type="helix" evidence="19">
    <location>
        <begin position="1801"/>
        <end position="1803"/>
    </location>
</feature>
<feature type="helix" evidence="19">
    <location>
        <begin position="1804"/>
        <end position="1809"/>
    </location>
</feature>
<feature type="turn" evidence="19">
    <location>
        <begin position="1814"/>
        <end position="1816"/>
    </location>
</feature>
<feature type="helix" evidence="19">
    <location>
        <begin position="1817"/>
        <end position="1819"/>
    </location>
</feature>
<feature type="helix" evidence="19">
    <location>
        <begin position="1822"/>
        <end position="1827"/>
    </location>
</feature>
<feature type="helix" evidence="19">
    <location>
        <begin position="1833"/>
        <end position="1845"/>
    </location>
</feature>
<keyword id="KW-0002">3D-structure</keyword>
<keyword id="KW-0025">Alternative splicing</keyword>
<keyword id="KW-0040">ANK repeat</keyword>
<keyword id="KW-1269">Autism</keyword>
<keyword id="KW-1268">Autism spectrum disorder</keyword>
<keyword id="KW-1003">Cell membrane</keyword>
<keyword id="KW-0966">Cell projection</keyword>
<keyword id="KW-0963">Cytoplasm</keyword>
<keyword id="KW-0325">Glycoprotein</keyword>
<keyword id="KW-0472">Membrane</keyword>
<keyword id="KW-0597">Phosphoprotein</keyword>
<keyword id="KW-1267">Proteomics identification</keyword>
<keyword id="KW-1185">Reference proteome</keyword>
<keyword id="KW-0677">Repeat</keyword>
<keyword id="KW-0728">SH3 domain</keyword>
<keyword id="KW-0729">SH3-binding</keyword>
<keyword id="KW-0770">Synapse</keyword>
<comment type="function">
    <text>Seems to be an adapter protein in the postsynaptic density (PSD) of excitatory synapses that interconnects receptors of the postsynaptic membrane including NMDA-type and metabotropic glutamate receptors, and the actin-based cytoskeleton. May play a role in the structural and functional organization of the dendritic spine and synaptic junction.</text>
</comment>
<comment type="subunit">
    <text evidence="8 9 11">Is part of a complex with DLG4/PSD-95 and DLGAP1/GKAP. Interacts with CTTN/cortactin SH3 domain, DLGAP1/GKAP and alpha-latrotoxin receptor 1. Interacts with DNM2, DBNL, GRID2, BAIAP2, SLC9A3, PLCB3 and CFTR. Interacts (via proline-rich region) with PDE4D. Interacts with ABI1 (via SH3 domain).</text>
</comment>
<comment type="interaction">
    <interactant intactId="EBI-1570571">
        <id>Q9UPX8</id>
    </interactant>
    <interactant intactId="EBI-886">
        <id>P46108</id>
        <label>CRK</label>
    </interactant>
    <organismsDiffer>false</organismsDiffer>
    <experiments>2</experiments>
</comment>
<comment type="interaction">
    <interactant intactId="EBI-1570571">
        <id>Q9UPX8</id>
    </interactant>
    <interactant intactId="EBI-401755">
        <id>P62993</id>
        <label>GRB2</label>
    </interactant>
    <organismsDiffer>false</organismsDiffer>
    <experiments>2</experiments>
</comment>
<comment type="interaction">
    <interactant intactId="EBI-1570571">
        <id>Q9UPX8</id>
    </interactant>
    <interactant intactId="EBI-389883">
        <id>P16333</id>
        <label>NCK1</label>
    </interactant>
    <organismsDiffer>false</organismsDiffer>
    <experiments>6</experiments>
</comment>
<comment type="interaction">
    <interactant intactId="EBI-1570571">
        <id>Q9UPX8</id>
    </interactant>
    <interactant intactId="EBI-79464">
        <id>P27986</id>
        <label>PIK3R1</label>
    </interactant>
    <organismsDiffer>false</organismsDiffer>
    <experiments>2</experiments>
</comment>
<comment type="interaction">
    <interactant intactId="EBI-1570571">
        <id>Q9UPX8</id>
    </interactant>
    <interactant intactId="EBI-79387">
        <id>P19174</id>
        <label>PLCG1</label>
    </interactant>
    <organismsDiffer>false</organismsDiffer>
    <experiments>4</experiments>
</comment>
<comment type="interaction">
    <interactant intactId="EBI-11959011">
        <id>Q9UPX8-4</id>
    </interactant>
    <interactant intactId="EBI-11959591">
        <id>Q8IWW6-4</id>
        <label>ARHGAP12</label>
    </interactant>
    <organismsDiffer>false</organismsDiffer>
    <experiments>3</experiments>
</comment>
<comment type="interaction">
    <interactant intactId="EBI-11959011">
        <id>Q9UPX8-4</id>
    </interactant>
    <interactant intactId="EBI-9092016">
        <id>Q9UQB8-6</id>
        <label>BAIAP2</label>
    </interactant>
    <organismsDiffer>false</organismsDiffer>
    <experiments>3</experiments>
</comment>
<comment type="interaction">
    <interactant intactId="EBI-11959011">
        <id>Q9UPX8-4</id>
    </interactant>
    <interactant intactId="EBI-746815">
        <id>Q86YM7</id>
        <label>HOMER1</label>
    </interactant>
    <organismsDiffer>false</organismsDiffer>
    <experiments>3</experiments>
</comment>
<comment type="interaction">
    <interactant intactId="EBI-11959011">
        <id>Q9UPX8-4</id>
    </interactant>
    <interactant intactId="EBI-11959013">
        <id>Q08209-2</id>
        <label>PPP3CA</label>
    </interactant>
    <organismsDiffer>false</organismsDiffer>
    <experiments>3</experiments>
</comment>
<comment type="interaction">
    <interactant intactId="EBI-11959011">
        <id>Q9UPX8-4</id>
    </interactant>
    <interactant intactId="EBI-12010512">
        <id>Q96MK2</id>
        <label>RIPOR3</label>
    </interactant>
    <organismsDiffer>false</organismsDiffer>
    <experiments>3</experiments>
</comment>
<comment type="subcellular location">
    <subcellularLocation>
        <location evidence="1">Apical cell membrane</location>
    </subcellularLocation>
    <subcellularLocation>
        <location evidence="1">Cytoplasm</location>
    </subcellularLocation>
    <subcellularLocation>
        <location evidence="1">Synapse</location>
    </subcellularLocation>
    <subcellularLocation>
        <location evidence="1">Postsynaptic density</location>
    </subcellularLocation>
    <subcellularLocation>
        <location evidence="1">Cell projection</location>
        <location evidence="1">Growth cone</location>
    </subcellularLocation>
    <subcellularLocation>
        <location evidence="1">Cell projection</location>
        <location evidence="1">Dendritic spine</location>
    </subcellularLocation>
    <text evidence="1">Colocalizes with cortactin in growth cones in differentiating hippocampal neurons. Colocalized with PDE4D to the apical membrane of colonic crypt cells (By similarity).</text>
</comment>
<comment type="alternative products">
    <event type="alternative splicing"/>
    <isoform>
        <id>Q9UPX8-3</id>
        <name>3</name>
        <name>E</name>
        <sequence type="displayed"/>
    </isoform>
    <isoform>
        <id>Q9UPX8-1</id>
        <name>1</name>
        <name>A</name>
        <sequence type="described" ref="VSP_061471"/>
    </isoform>
    <isoform>
        <id>Q9UPX8-2</id>
        <name>2</name>
        <name>C</name>
        <sequence type="described" ref="VSP_061470 VSP_061473 VSP_061474"/>
    </isoform>
    <isoform>
        <id>Q9UPX8-4</id>
        <name>4</name>
        <name>B</name>
        <sequence type="described" ref="VSP_061470 VSP_061472"/>
    </isoform>
    <text>Additional isoforms seem to exist.</text>
</comment>
<comment type="tissue specificity">
    <text evidence="10 11">Isoform 3 is present in epithelial colonic cells (at protein level).</text>
</comment>
<comment type="domain">
    <text evidence="1">The PDZ domain is required for interaction with GRID2, PLCB3, CFTR and SLC9A3.</text>
</comment>
<comment type="disease" evidence="12">
    <disease id="DI-02794">
        <name>Autism 17</name>
        <acronym>AUTS17</acronym>
        <description>A complex multifactorial, pervasive developmental disorder characterized by impairments in reciprocal social interaction and communication, restricted and stereotyped patterns of interests and activities, and the presence of developmental abnormalities by 3 years of age. Most individuals with autism also manifest moderate intellectual disability.</description>
        <dbReference type="MIM" id="613436"/>
    </disease>
    <text>Disease susceptibility is associated with variants affecting the gene represented in this entry.</text>
</comment>
<comment type="miscellaneous">
    <molecule>Isoform 3</molecule>
    <text evidence="18">Contains 6 ANK repeats at positions 196-226, 230-259, 263-293, 297-326, 330-359, 363-393.</text>
</comment>
<comment type="similarity">
    <text evidence="18">Belongs to the SHANK family.</text>
</comment>
<accession>Q9UPX8</accession>
<accession>C0SPG8</accession>
<accession>C0SPG9</accession>
<accession>Q3Y8G9</accession>
<accession>Q52LK2</accession>
<accession>Q9UKP1</accession>
<sequence length="1849" mass="201261">MPRSPTSSEDEMAQSFSDYSVGSESDSSKEETIYDTIRATAEKPGGARTEESQGNTLVIRVVIHDLQQTKCIRFNPDATVWVAKQRILCTLTQSLKDVLNYGLFQPASNGRDGKFLDEERLLREYPQPVGEGVPSLEFRYKKRVYKQASLDEKQLAKLHTKTNLKKCMDHIQHRLVEKITKMLDRGLDPNFHDPETGETPLTLAAQLDDSVEVIKALKNGGAHLDFRAKDGMTALHKAARARNQVALKTLLELGASPDYKDSYGLTPLYHTAIVGGDPYCCELLLHEHATVCCKDENGWHEIHQACRYGHVQHLEHLLFYGADMSAQNASGNTALHICALYNQDSCARVLLFRGGNKELKNYNSQTPFQVAIIAGNFELAEYIKNHKETDIVPFREAPAYSNRRRRPPNTLAAPRVLLRSNSDNNLNASAPDWAVCSTATSHRSLSPQLLQQMPSKPEGAAKTIGSYVPGPRSRSPSLNRLGGAGEDGKRPQPLWHVGSPFALGANKDSLSAFEYPGPKRKLYSAVPGRLFVAVKPYQPQVDGEIPLHRGDRVKVLSIGEGGFWEGSARGHIGWFPAECVEEVQCKPRDSQAETRADRSKKLFRHYTVGSYDSFDTSSDCIIEEKTVVLQKKDNEGFGFVLRGAKADTPIEEFTPTPAFPALQYLESVDEGGVAWQAGLRTGDFLIEVNNENVVKVGHRQVVNMIRQGGNHLVLKVVTVTRNLDPDDTARKKAPPPPKRAPTTALTLRSKSMTSELEELVDKASVRKKKDKPEEIVPASKPSRAAENMAVEPRVATIKQRPSSRCFPAGSDMNSVYERQGIAVMTPTVPGSPKAPFLGIPRGTMRRQKSIDSRIFLSGITEEERQFLAPPMLKFTRSLSMPDTSEDIPPPPQSVPPSPPPPSPTTYNCPKSPTPRVYGTIKPAFNQNSAAKVSPATRSDTVATMMREKGMYFRRELDRYSLDSEDLYSRNAGPQANFRNKRGQMPENPYSEVGKIASKAVYVPAKPARRKGMLVKQSNVEDSPEKTCSIPIPTIIVKEPSTSSSGKSSQGSSMEIDPQAPEPPSQLRPDESLTVSSPFAAAIAGAVRDREKRLEARRNSPAFLSTDLGDEDVGLGPPAPRTRPSMFPEEGDFADEDSAEQLSSPMPSATPREPENHFVGGAEASAPGEAGRPLNSTSKAQGPESSPAVPSASSGTAGPGNYVHPLTGRLLDPSSPLALALSARDRAMKESQQGPKGEAPKADLNKPLYIDTKMRPSLDAGFPTVTRQNTRGPLRRQETENKYETDLGRDRKGDDKKNMLIDIMDTSQQKSAGLLMVHTVDATKLDNALQEEDEKAEVEMKPDSSPSEVPEGVSETEGALQISAAPEPTTVPGRTIVAVGSMEEAVILPFRIPPPPLASVDLDEDFIFTEPLPPPLEFANSFDIPDDRAASVPALSDLVKQKKSDTPQSPSLNSSQPTNSADSKKPASLSNCLPASFLPPPESFDAVADSGIEEVDSRSSSDHHLETTSTISTVSSISTLSSEGGENVDTCTVYADGQAFMVDKPPVPPKPKMKPIIHKSNALYQDALVEEDVDSFVIPPPAPPPPPGSAQPGMAKVLQPRTSKLWGDVTEIKSPILSGPKANVISELNSILQQMNREKLAKPGEGLDSPMGAKSASLAPRSPEIMSTISGTRSTTVTFTVRPGTSQPITLQSRPPDYESRTSGTRRAPSPVVSPTEMNKETLPAPLSAATASPSPALSDVFSLPSQPPSGDLFGLNPAGRSRSPSPSILQQPISNKPFTTKPVHLWTKPDVADWLESLNLGEHKEAFMDNEIDGSHLPNLQKEDLIDLGVTRVGHRMNIERALKQLLDR</sequence>
<organism>
    <name type="scientific">Homo sapiens</name>
    <name type="common">Human</name>
    <dbReference type="NCBI Taxonomy" id="9606"/>
    <lineage>
        <taxon>Eukaryota</taxon>
        <taxon>Metazoa</taxon>
        <taxon>Chordata</taxon>
        <taxon>Craniata</taxon>
        <taxon>Vertebrata</taxon>
        <taxon>Euteleostomi</taxon>
        <taxon>Mammalia</taxon>
        <taxon>Eutheria</taxon>
        <taxon>Euarchontoglires</taxon>
        <taxon>Primates</taxon>
        <taxon>Haplorrhini</taxon>
        <taxon>Catarrhini</taxon>
        <taxon>Hominidae</taxon>
        <taxon>Homo</taxon>
    </lineage>
</organism>
<gene>
    <name type="primary">SHANK2</name>
    <name type="synonym">CORTBP1</name>
    <name type="synonym">KIAA1022</name>
    <name type="synonym">PROSAP1</name>
</gene>
<reference key="1">
    <citation type="submission" date="2005-03" db="EMBL/GenBank/DDBJ databases">
        <title>A molecular scaffolding protein, Shank2, is a potent tumor suppressor in esophageal squamous cell carcinoma.</title>
        <authorList>
            <person name="Akahane T."/>
            <person name="Hosoda F."/>
            <person name="Arai Y."/>
            <person name="Fujisawa N."/>
            <person name="Kitabayashi I."/>
            <person name="Ohta T."/>
            <person name="Aoyagi K."/>
            <person name="Sasaki H."/>
            <person name="Nakanishi Y."/>
            <person name="Hirohashi S."/>
            <person name="Ohki M."/>
        </authorList>
    </citation>
    <scope>NUCLEOTIDE SEQUENCE [MRNA] (ISOFORMS 1 AND 3)</scope>
</reference>
<reference key="2">
    <citation type="journal article" date="2006" name="Nature">
        <title>Human chromosome 11 DNA sequence and analysis including novel gene identification.</title>
        <authorList>
            <person name="Taylor T.D."/>
            <person name="Noguchi H."/>
            <person name="Totoki Y."/>
            <person name="Toyoda A."/>
            <person name="Kuroki Y."/>
            <person name="Dewar K."/>
            <person name="Lloyd C."/>
            <person name="Itoh T."/>
            <person name="Takeda T."/>
            <person name="Kim D.-W."/>
            <person name="She X."/>
            <person name="Barlow K.F."/>
            <person name="Bloom T."/>
            <person name="Bruford E."/>
            <person name="Chang J.L."/>
            <person name="Cuomo C.A."/>
            <person name="Eichler E."/>
            <person name="FitzGerald M.G."/>
            <person name="Jaffe D.B."/>
            <person name="LaButti K."/>
            <person name="Nicol R."/>
            <person name="Park H.-S."/>
            <person name="Seaman C."/>
            <person name="Sougnez C."/>
            <person name="Yang X."/>
            <person name="Zimmer A.R."/>
            <person name="Zody M.C."/>
            <person name="Birren B.W."/>
            <person name="Nusbaum C."/>
            <person name="Fujiyama A."/>
            <person name="Hattori M."/>
            <person name="Rogers J."/>
            <person name="Lander E.S."/>
            <person name="Sakaki Y."/>
        </authorList>
    </citation>
    <scope>NUCLEOTIDE SEQUENCE [LARGE SCALE GENOMIC DNA]</scope>
</reference>
<reference key="3">
    <citation type="journal article" date="2004" name="Genome Res.">
        <title>The status, quality, and expansion of the NIH full-length cDNA project: the Mammalian Gene Collection (MGC).</title>
        <authorList>
            <consortium name="The MGC Project Team"/>
        </authorList>
    </citation>
    <scope>NUCLEOTIDE SEQUENCE [LARGE SCALE MRNA] (ISOFORM 2)</scope>
    <source>
        <tissue>Brain</tissue>
    </source>
</reference>
<reference key="4">
    <citation type="journal article" date="2006" name="J. Biol. Chem.">
        <title>Shank2 associates with and regulates Na+/H+ exchanger 3.</title>
        <authorList>
            <person name="Han W."/>
            <person name="Kim K.H."/>
            <person name="Jo M.J."/>
            <person name="Lee J.H."/>
            <person name="Yang J."/>
            <person name="Doctor R.B."/>
            <person name="Moe O.W."/>
            <person name="Lee J."/>
            <person name="Kim E."/>
            <person name="Lee M.G."/>
        </authorList>
    </citation>
    <scope>NUCLEOTIDE SEQUENCE [MRNA] OF 380-707 (ISOFORM 3)</scope>
    <scope>TISSUE SPECIFICITY</scope>
</reference>
<reference key="5">
    <citation type="journal article" date="1999" name="DNA Res.">
        <title>Prediction of the coding sequences of unidentified human genes. XIV. The complete sequences of 100 new cDNA clones from brain which code for large proteins in vitro.</title>
        <authorList>
            <person name="Kikuno R."/>
            <person name="Nagase T."/>
            <person name="Ishikawa K."/>
            <person name="Hirosawa M."/>
            <person name="Miyajima N."/>
            <person name="Tanaka A."/>
            <person name="Kotani H."/>
            <person name="Nomura N."/>
            <person name="Ohara O."/>
        </authorList>
    </citation>
    <scope>PARTIAL NUCLEOTIDE SEQUENCE [LARGE SCALE MRNA] (ISOFORM 4)</scope>
    <source>
        <tissue>Brain</tissue>
    </source>
</reference>
<reference key="6">
    <citation type="journal article" date="1999" name="J. Biol. Chem.">
        <title>Characterization of the shank family of synaptic proteins. Multiple genes, alternative splicing, and differential expression in brain and development.</title>
        <authorList>
            <person name="Lim S."/>
            <person name="Naisbitt S."/>
            <person name="Yoon J."/>
            <person name="Hwang J.-I."/>
            <person name="Suh P.-G."/>
            <person name="Sheng M."/>
            <person name="Kim E."/>
        </authorList>
    </citation>
    <scope>PARTIAL NUCLEOTIDE SEQUENCE [MRNA] (ISOFORM 2)</scope>
</reference>
<reference key="7">
    <citation type="journal article" date="2000" name="J. Cell Sci.">
        <title>The Shank family of scaffold proteins.</title>
        <authorList>
            <person name="Sheng M."/>
            <person name="Kim E."/>
        </authorList>
    </citation>
    <scope>REVIEW</scope>
</reference>
<reference key="8">
    <citation type="journal article" date="2001" name="J. Biol. Chem.">
        <title>Dynamin isoform-specific interaction with the shank/ProSAP scaffolding proteins of the postsynaptic density and actin cytoskeleton.</title>
        <authorList>
            <person name="Okamoto P.M."/>
            <person name="Gamby C."/>
            <person name="Wells D."/>
            <person name="Fallon J."/>
            <person name="Vallee R.B."/>
        </authorList>
    </citation>
    <scope>INTERACTION WITH DNM2</scope>
</reference>
<reference key="9">
    <citation type="journal article" date="2002" name="Mol. Cell. Neurosci.">
        <title>The insulin receptor substrate IRSp53 links postsynaptic shank1 to the small G-protein cdc42.</title>
        <authorList>
            <person name="Soltau M."/>
            <person name="Richter D."/>
            <person name="Kreienkamp H.-J."/>
        </authorList>
    </citation>
    <scope>INTERACTION WITH BAIAP2</scope>
</reference>
<reference key="10">
    <citation type="journal article" date="2007" name="J. Biol. Chem.">
        <title>Dynamic regulation of cystic fibrosis transmembrane conductance regulator by competitive interactions of molecular adaptors.</title>
        <authorList>
            <person name="Lee J.H."/>
            <person name="Richter W."/>
            <person name="Namkung W."/>
            <person name="Kim K.H."/>
            <person name="Kim E."/>
            <person name="Conti M."/>
            <person name="Lee M.G."/>
        </authorList>
    </citation>
    <scope>INTERACTION WITH PDE4D</scope>
    <scope>TISSUE SPECIFICITY</scope>
</reference>
<reference key="11">
    <citation type="journal article" date="2010" name="Nat. Genet.">
        <title>Mutations in the SHANK2 synaptic scaffolding gene in autism spectrum disorder and mental retardation.</title>
        <authorList>
            <person name="Berkel S."/>
            <person name="Marshall C.R."/>
            <person name="Weiss B."/>
            <person name="Howe J."/>
            <person name="Roeth R."/>
            <person name="Moog U."/>
            <person name="Endris V."/>
            <person name="Roberts W."/>
            <person name="Szatmari P."/>
            <person name="Pinto D."/>
            <person name="Bonin M."/>
            <person name="Riess A."/>
            <person name="Engels H."/>
            <person name="Sprengel R."/>
            <person name="Scherer S.W."/>
            <person name="Rappold G.A."/>
        </authorList>
    </citation>
    <scope>INVOLVEMENT IN AUTS17</scope>
</reference>
<reference key="12">
    <citation type="journal article" date="2018" name="PLoS Genet.">
        <title>De novo mutations in the GTP/GDP-binding region of RALA, a RAS-like small GTPase, cause intellectual disability and developmental delay.</title>
        <authorList>
            <person name="Hiatt S.M."/>
            <person name="Neu M.B."/>
            <person name="Ramaker R.C."/>
            <person name="Hardigan A.A."/>
            <person name="Prokop J.W."/>
            <person name="Hancarova M."/>
            <person name="Prchalova D."/>
            <person name="Havlovicova M."/>
            <person name="Prchal J."/>
            <person name="Stranecky V."/>
            <person name="Yim D.K.C."/>
            <person name="Powis Z."/>
            <person name="Keren B."/>
            <person name="Nava C."/>
            <person name="Mignot C."/>
            <person name="Rio M."/>
            <person name="Revah-Politi A."/>
            <person name="Hemati P."/>
            <person name="Stong N."/>
            <person name="Iglesias A.D."/>
            <person name="Suchy S.F."/>
            <person name="Willaert R."/>
            <person name="Wentzensen I.M."/>
            <person name="Wheeler P.G."/>
            <person name="Brick L."/>
            <person name="Kozenko M."/>
            <person name="Hurst A.C.E."/>
            <person name="Wheless J.W."/>
            <person name="Lacassie Y."/>
            <person name="Myers R.M."/>
            <person name="Barsh G.S."/>
            <person name="Sedlacek Z."/>
            <person name="Cooper G.M."/>
        </authorList>
    </citation>
    <scope>VARIANT THR-1101</scope>
</reference>
<reference key="13">
    <citation type="journal article" date="2011" name="Sci. Signal.">
        <title>System-wide temporal characterization of the proteome and phosphoproteome of human embryonic stem cell differentiation.</title>
        <authorList>
            <person name="Rigbolt K.T."/>
            <person name="Prokhorova T.A."/>
            <person name="Akimov V."/>
            <person name="Henningsen J."/>
            <person name="Johansen P.T."/>
            <person name="Kratchmarova I."/>
            <person name="Kassem M."/>
            <person name="Mann M."/>
            <person name="Olsen J.V."/>
            <person name="Blagoev B."/>
        </authorList>
    </citation>
    <scope>IDENTIFICATION BY MASS SPECTROMETRY [LARGE SCALE ANALYSIS]</scope>
</reference>
<name>SHAN2_HUMAN</name>
<proteinExistence type="evidence at protein level"/>